<sequence length="911" mass="102201">MATSVDNRHYPRLNPAINGVVRSFKPPPIPSPRHQNKTVSFLTEKVIVKETKNDAVDDSYDSSDDEDESHNRNVSYYKEMIRKSHSDVEPSILDSRDESTADNWIHRNSSMVRLTGKHPFNAEPPLPRLMHHGFITPVPLHYVRNHGTVPKADWSEWTVEITGLVKRPAKFTMEELISEFPSREFPVTLVCAGNRRKEQNMVKQTIGFNWGSAGVSTSLWKGVPLSEILGRCGIYSRRGGGLNVCFEGAEDLPGGGGSKYGTSIKKEMAMDPARDIILAYMQNGELLTPDHGFPVRIIVPGFIGGRMVKWLKRIIVTPQESDSYYHYKDNRVLPSLVDAELANAEAWWYKPEYIINELNINSVITTPGHQEILPINAFTTQKPYTLKGYAYSGGGKKVTRVEVTLDGGDTWSVCDLDHQEKPNKYGKFWCWCFWSLDVEVLDLLSAKDVAVRAWDESFNTQPDKLIWNLMGMMNNCWFRIKTNVCKPHKGEIGIVFEHPTRPGNQSGGWMAKERQLEISSESNPILKKSVSSPFMNTSAKMYSMSEVRKHNSVESAWIIVHGHIYDCTRFLKDHPGGSDSILINAGTDCTEEFEAIHSDKAKKLLEDYRIGELITTGYDSSPNVSVHGGSTAVSLLAPIKELAPSKNIALVNPREKVPVTLIEKTSISHDVRRFRFALPSEDQQLGLPVGKHIFLCANINDKLCLRAYTPTSTVDAVGHIDLVVKVYFKDVHPRFPNGGLMSQHLDSLPIGSVLNIKGPLGHIEYLGKGNFMVTGKPKFAKKLAMLAGGPGITPIYQVIQSILSDPEDETEMFVVYANRTEDDILVREELEGWANKHKDRLKVWYVVEIAKEGWNYSTGFITEPVLREHVPEGLEGESLALACGPPPMIQFALQPNLEKMGYNVKEDLLIF</sequence>
<organism>
    <name type="scientific">Brassica napus</name>
    <name type="common">Rape</name>
    <dbReference type="NCBI Taxonomy" id="3708"/>
    <lineage>
        <taxon>Eukaryota</taxon>
        <taxon>Viridiplantae</taxon>
        <taxon>Streptophyta</taxon>
        <taxon>Embryophyta</taxon>
        <taxon>Tracheophyta</taxon>
        <taxon>Spermatophyta</taxon>
        <taxon>Magnoliopsida</taxon>
        <taxon>eudicotyledons</taxon>
        <taxon>Gunneridae</taxon>
        <taxon>Pentapetalae</taxon>
        <taxon>rosids</taxon>
        <taxon>malvids</taxon>
        <taxon>Brassicales</taxon>
        <taxon>Brassicaceae</taxon>
        <taxon>Brassiceae</taxon>
        <taxon>Brassica</taxon>
    </lineage>
</organism>
<reference key="1">
    <citation type="journal article" date="1996" name="Plant Physiol.">
        <title>Developmental stage-specific and nitrate-independent regulation of nitrate reductase gene expression in rapeseed.</title>
        <authorList>
            <person name="Fukuoka H."/>
            <person name="Ogawa T."/>
            <person name="Minami H."/>
            <person name="Yano H."/>
            <person name="Ohkawa Y."/>
        </authorList>
    </citation>
    <scope>NUCLEOTIDE SEQUENCE [MRNA]</scope>
    <source>
        <strain>cv. Lisandra</strain>
    </source>
</reference>
<evidence type="ECO:0000250" key="1"/>
<evidence type="ECO:0000250" key="2">
    <source>
        <dbReference type="UniProtKB" id="A0A286R227"/>
    </source>
</evidence>
<evidence type="ECO:0000250" key="3">
    <source>
        <dbReference type="UniProtKB" id="P17571"/>
    </source>
</evidence>
<evidence type="ECO:0000250" key="4">
    <source>
        <dbReference type="UniProtKB" id="P49050"/>
    </source>
</evidence>
<evidence type="ECO:0000255" key="5"/>
<evidence type="ECO:0000255" key="6">
    <source>
        <dbReference type="PROSITE-ProRule" id="PRU00279"/>
    </source>
</evidence>
<evidence type="ECO:0000255" key="7">
    <source>
        <dbReference type="PROSITE-ProRule" id="PRU00716"/>
    </source>
</evidence>
<evidence type="ECO:0000256" key="8">
    <source>
        <dbReference type="SAM" id="MobiDB-lite"/>
    </source>
</evidence>
<evidence type="ECO:0000305" key="9"/>
<feature type="chain" id="PRO_0000166052" description="Nitrate reductase [NADH], clone PBNBR1412">
    <location>
        <begin position="1"/>
        <end position="911"/>
    </location>
</feature>
<feature type="domain" description="Cytochrome b5 heme-binding" evidence="6">
    <location>
        <begin position="539"/>
        <end position="614"/>
    </location>
</feature>
<feature type="domain" description="FAD-binding FR-type" evidence="7">
    <location>
        <begin position="654"/>
        <end position="766"/>
    </location>
</feature>
<feature type="region of interest" description="Disordered" evidence="8">
    <location>
        <begin position="53"/>
        <end position="72"/>
    </location>
</feature>
<feature type="compositionally biased region" description="Acidic residues" evidence="8">
    <location>
        <begin position="56"/>
        <end position="68"/>
    </location>
</feature>
<feature type="binding site" evidence="4">
    <location>
        <position position="191"/>
    </location>
    <ligand>
        <name>Mo-molybdopterin</name>
        <dbReference type="ChEBI" id="CHEBI:71302"/>
    </ligand>
    <ligandPart>
        <name>Mo</name>
        <dbReference type="ChEBI" id="CHEBI:28685"/>
    </ligandPart>
</feature>
<feature type="binding site" description="axial binding residue" evidence="6">
    <location>
        <position position="574"/>
    </location>
    <ligand>
        <name>heme</name>
        <dbReference type="ChEBI" id="CHEBI:30413"/>
    </ligand>
    <ligandPart>
        <name>Fe</name>
        <dbReference type="ChEBI" id="CHEBI:18248"/>
    </ligandPart>
</feature>
<feature type="binding site" description="axial binding residue" evidence="6">
    <location>
        <position position="597"/>
    </location>
    <ligand>
        <name>heme</name>
        <dbReference type="ChEBI" id="CHEBI:30413"/>
    </ligand>
    <ligandPart>
        <name>Fe</name>
        <dbReference type="ChEBI" id="CHEBI:18248"/>
    </ligandPart>
</feature>
<feature type="binding site" evidence="2">
    <location>
        <begin position="706"/>
        <end position="709"/>
    </location>
    <ligand>
        <name>FAD</name>
        <dbReference type="ChEBI" id="CHEBI:57692"/>
    </ligand>
</feature>
<feature type="binding site" evidence="2">
    <location>
        <begin position="723"/>
        <end position="727"/>
    </location>
    <ligand>
        <name>FAD</name>
        <dbReference type="ChEBI" id="CHEBI:57692"/>
    </ligand>
</feature>
<feature type="binding site" evidence="3">
    <location>
        <position position="728"/>
    </location>
    <ligand>
        <name>FAD</name>
        <dbReference type="ChEBI" id="CHEBI:57692"/>
    </ligand>
</feature>
<feature type="binding site" evidence="2">
    <location>
        <position position="735"/>
    </location>
    <ligand>
        <name>FAD</name>
        <dbReference type="ChEBI" id="CHEBI:57692"/>
    </ligand>
</feature>
<feature type="binding site" evidence="2">
    <location>
        <begin position="740"/>
        <end position="742"/>
    </location>
    <ligand>
        <name>FAD</name>
        <dbReference type="ChEBI" id="CHEBI:57692"/>
    </ligand>
</feature>
<feature type="binding site" evidence="2">
    <location>
        <position position="793"/>
    </location>
    <ligand>
        <name>FAD</name>
        <dbReference type="ChEBI" id="CHEBI:57692"/>
    </ligand>
</feature>
<feature type="disulfide bond" description="Interchain" evidence="5">
    <location>
        <position position="430"/>
    </location>
</feature>
<name>NIA2_BRANA</name>
<comment type="function">
    <text>Nitrate reductase is a key enzyme involved in the first step of nitrate assimilation in plants, fungi and bacteria.</text>
</comment>
<comment type="catalytic activity">
    <reaction>
        <text>nitrite + NAD(+) + H2O = nitrate + NADH + H(+)</text>
        <dbReference type="Rhea" id="RHEA:17913"/>
        <dbReference type="ChEBI" id="CHEBI:15377"/>
        <dbReference type="ChEBI" id="CHEBI:15378"/>
        <dbReference type="ChEBI" id="CHEBI:16301"/>
        <dbReference type="ChEBI" id="CHEBI:17632"/>
        <dbReference type="ChEBI" id="CHEBI:57540"/>
        <dbReference type="ChEBI" id="CHEBI:57945"/>
        <dbReference type="EC" id="1.7.1.1"/>
    </reaction>
</comment>
<comment type="cofactor">
    <cofactor evidence="1">
        <name>FAD</name>
        <dbReference type="ChEBI" id="CHEBI:57692"/>
    </cofactor>
    <text evidence="1">Binds 1 FAD.</text>
</comment>
<comment type="cofactor">
    <cofactor evidence="1">
        <name>heme</name>
        <dbReference type="ChEBI" id="CHEBI:30413"/>
    </cofactor>
    <text evidence="1">Binds 1 heme group. The heme group is called cytochrome b-557.</text>
</comment>
<comment type="cofactor">
    <cofactor evidence="1">
        <name>Mo-molybdopterin</name>
        <dbReference type="ChEBI" id="CHEBI:71302"/>
    </cofactor>
    <text evidence="1">Binds 1 Mo-molybdopterin (Mo-MPT) cofactor per subunit.</text>
</comment>
<comment type="subunit">
    <text evidence="1">Homodimer.</text>
</comment>
<comment type="similarity">
    <text evidence="9">Belongs to the nitrate reductase family.</text>
</comment>
<dbReference type="EC" id="1.7.1.1"/>
<dbReference type="EMBL" id="D38220">
    <property type="protein sequence ID" value="BAA07395.1"/>
    <property type="molecule type" value="mRNA"/>
</dbReference>
<dbReference type="PIR" id="T08108">
    <property type="entry name" value="T08108"/>
</dbReference>
<dbReference type="RefSeq" id="NP_001303048.1">
    <property type="nucleotide sequence ID" value="NM_001316119.1"/>
</dbReference>
<dbReference type="SMR" id="P39868"/>
<dbReference type="GeneID" id="106368948"/>
<dbReference type="KEGG" id="bna:106368948"/>
<dbReference type="OrthoDB" id="432685at2759"/>
<dbReference type="GO" id="GO:0071949">
    <property type="term" value="F:FAD binding"/>
    <property type="evidence" value="ECO:0000250"/>
    <property type="project" value="UniProtKB"/>
</dbReference>
<dbReference type="GO" id="GO:0020037">
    <property type="term" value="F:heme binding"/>
    <property type="evidence" value="ECO:0007669"/>
    <property type="project" value="InterPro"/>
</dbReference>
<dbReference type="GO" id="GO:0030151">
    <property type="term" value="F:molybdenum ion binding"/>
    <property type="evidence" value="ECO:0000250"/>
    <property type="project" value="UniProtKB"/>
</dbReference>
<dbReference type="GO" id="GO:0043546">
    <property type="term" value="F:molybdopterin cofactor binding"/>
    <property type="evidence" value="ECO:0007669"/>
    <property type="project" value="InterPro"/>
</dbReference>
<dbReference type="GO" id="GO:0009703">
    <property type="term" value="F:nitrate reductase (NADH) activity"/>
    <property type="evidence" value="ECO:0007669"/>
    <property type="project" value="UniProtKB-EC"/>
</dbReference>
<dbReference type="GO" id="GO:0050464">
    <property type="term" value="F:nitrate reductase (NADPH) activity"/>
    <property type="evidence" value="ECO:0007669"/>
    <property type="project" value="InterPro"/>
</dbReference>
<dbReference type="GO" id="GO:0042128">
    <property type="term" value="P:nitrate assimilation"/>
    <property type="evidence" value="ECO:0007669"/>
    <property type="project" value="UniProtKB-KW"/>
</dbReference>
<dbReference type="GO" id="GO:0006809">
    <property type="term" value="P:nitric oxide biosynthetic process"/>
    <property type="evidence" value="ECO:0007669"/>
    <property type="project" value="InterPro"/>
</dbReference>
<dbReference type="CDD" id="cd06183">
    <property type="entry name" value="cyt_b5_reduct_like"/>
    <property type="match status" value="1"/>
</dbReference>
<dbReference type="CDD" id="cd02112">
    <property type="entry name" value="eukary_NR_Moco"/>
    <property type="match status" value="1"/>
</dbReference>
<dbReference type="FunFam" id="2.40.30.10:FF:000021">
    <property type="entry name" value="NADH-cytochrome b5 reductase"/>
    <property type="match status" value="1"/>
</dbReference>
<dbReference type="FunFam" id="2.60.40.650:FF:000001">
    <property type="entry name" value="Nitrate reductase"/>
    <property type="match status" value="1"/>
</dbReference>
<dbReference type="FunFam" id="3.10.120.10:FF:000008">
    <property type="entry name" value="Nitrate reductase"/>
    <property type="match status" value="1"/>
</dbReference>
<dbReference type="FunFam" id="3.90.420.10:FF:000003">
    <property type="entry name" value="Nitrate reductase"/>
    <property type="match status" value="1"/>
</dbReference>
<dbReference type="FunFam" id="3.40.50.80:FF:000025">
    <property type="entry name" value="Nitrate reductase [NADH]"/>
    <property type="match status" value="1"/>
</dbReference>
<dbReference type="Gene3D" id="2.60.40.650">
    <property type="match status" value="1"/>
</dbReference>
<dbReference type="Gene3D" id="3.10.120.10">
    <property type="entry name" value="Cytochrome b5-like heme/steroid binding domain"/>
    <property type="match status" value="1"/>
</dbReference>
<dbReference type="Gene3D" id="3.40.50.80">
    <property type="entry name" value="Nucleotide-binding domain of ferredoxin-NADP reductase (FNR) module"/>
    <property type="match status" value="1"/>
</dbReference>
<dbReference type="Gene3D" id="3.90.420.10">
    <property type="entry name" value="Oxidoreductase, molybdopterin-binding domain"/>
    <property type="match status" value="1"/>
</dbReference>
<dbReference type="Gene3D" id="2.40.30.10">
    <property type="entry name" value="Translation factors"/>
    <property type="match status" value="1"/>
</dbReference>
<dbReference type="InterPro" id="IPR008333">
    <property type="entry name" value="Cbr1-like_FAD-bd_dom"/>
</dbReference>
<dbReference type="InterPro" id="IPR001199">
    <property type="entry name" value="Cyt_B5-like_heme/steroid-bd"/>
</dbReference>
<dbReference type="InterPro" id="IPR036400">
    <property type="entry name" value="Cyt_B5-like_heme/steroid_sf"/>
</dbReference>
<dbReference type="InterPro" id="IPR018506">
    <property type="entry name" value="Cyt_B5_heme-BS"/>
</dbReference>
<dbReference type="InterPro" id="IPR017927">
    <property type="entry name" value="FAD-bd_FR_type"/>
</dbReference>
<dbReference type="InterPro" id="IPR001709">
    <property type="entry name" value="Flavoprot_Pyr_Nucl_cyt_Rdtase"/>
</dbReference>
<dbReference type="InterPro" id="IPR039261">
    <property type="entry name" value="FNR_nucleotide-bd"/>
</dbReference>
<dbReference type="InterPro" id="IPR014756">
    <property type="entry name" value="Ig_E-set"/>
</dbReference>
<dbReference type="InterPro" id="IPR005066">
    <property type="entry name" value="MoCF_OxRdtse_dimer"/>
</dbReference>
<dbReference type="InterPro" id="IPR008335">
    <property type="entry name" value="Mopterin_OxRdtase_euk"/>
</dbReference>
<dbReference type="InterPro" id="IPR012137">
    <property type="entry name" value="Nitr_rd_NADH"/>
</dbReference>
<dbReference type="InterPro" id="IPR001433">
    <property type="entry name" value="OxRdtase_FAD/NAD-bd"/>
</dbReference>
<dbReference type="InterPro" id="IPR000572">
    <property type="entry name" value="OxRdtase_Mopterin-bd_dom"/>
</dbReference>
<dbReference type="InterPro" id="IPR036374">
    <property type="entry name" value="OxRdtase_Mopterin-bd_sf"/>
</dbReference>
<dbReference type="InterPro" id="IPR022407">
    <property type="entry name" value="OxRdtase_Mopterin_BS"/>
</dbReference>
<dbReference type="InterPro" id="IPR017938">
    <property type="entry name" value="Riboflavin_synthase-like_b-brl"/>
</dbReference>
<dbReference type="PANTHER" id="PTHR19372:SF7">
    <property type="entry name" value="SULFITE OXIDASE, MITOCHONDRIAL"/>
    <property type="match status" value="1"/>
</dbReference>
<dbReference type="PANTHER" id="PTHR19372">
    <property type="entry name" value="SULFITE REDUCTASE"/>
    <property type="match status" value="1"/>
</dbReference>
<dbReference type="Pfam" id="PF00173">
    <property type="entry name" value="Cyt-b5"/>
    <property type="match status" value="1"/>
</dbReference>
<dbReference type="Pfam" id="PF00970">
    <property type="entry name" value="FAD_binding_6"/>
    <property type="match status" value="1"/>
</dbReference>
<dbReference type="Pfam" id="PF03404">
    <property type="entry name" value="Mo-co_dimer"/>
    <property type="match status" value="1"/>
</dbReference>
<dbReference type="Pfam" id="PF00175">
    <property type="entry name" value="NAD_binding_1"/>
    <property type="match status" value="1"/>
</dbReference>
<dbReference type="Pfam" id="PF00174">
    <property type="entry name" value="Oxidored_molyb"/>
    <property type="match status" value="1"/>
</dbReference>
<dbReference type="PIRSF" id="PIRSF000233">
    <property type="entry name" value="Nitr_rd_NADH"/>
    <property type="match status" value="1"/>
</dbReference>
<dbReference type="PRINTS" id="PR00406">
    <property type="entry name" value="CYTB5RDTASE"/>
</dbReference>
<dbReference type="PRINTS" id="PR00363">
    <property type="entry name" value="CYTOCHROMEB5"/>
</dbReference>
<dbReference type="PRINTS" id="PR00407">
    <property type="entry name" value="EUMOPTERIN"/>
</dbReference>
<dbReference type="PRINTS" id="PR00371">
    <property type="entry name" value="FPNCR"/>
</dbReference>
<dbReference type="SMART" id="SM01117">
    <property type="entry name" value="Cyt-b5"/>
    <property type="match status" value="1"/>
</dbReference>
<dbReference type="SUPFAM" id="SSF55856">
    <property type="entry name" value="Cytochrome b5-like heme/steroid binding domain"/>
    <property type="match status" value="1"/>
</dbReference>
<dbReference type="SUPFAM" id="SSF81296">
    <property type="entry name" value="E set domains"/>
    <property type="match status" value="1"/>
</dbReference>
<dbReference type="SUPFAM" id="SSF52343">
    <property type="entry name" value="Ferredoxin reductase-like, C-terminal NADP-linked domain"/>
    <property type="match status" value="1"/>
</dbReference>
<dbReference type="SUPFAM" id="SSF56524">
    <property type="entry name" value="Oxidoreductase molybdopterin-binding domain"/>
    <property type="match status" value="1"/>
</dbReference>
<dbReference type="SUPFAM" id="SSF63380">
    <property type="entry name" value="Riboflavin synthase domain-like"/>
    <property type="match status" value="1"/>
</dbReference>
<dbReference type="PROSITE" id="PS00191">
    <property type="entry name" value="CYTOCHROME_B5_1"/>
    <property type="match status" value="1"/>
</dbReference>
<dbReference type="PROSITE" id="PS50255">
    <property type="entry name" value="CYTOCHROME_B5_2"/>
    <property type="match status" value="1"/>
</dbReference>
<dbReference type="PROSITE" id="PS51384">
    <property type="entry name" value="FAD_FR"/>
    <property type="match status" value="1"/>
</dbReference>
<dbReference type="PROSITE" id="PS00559">
    <property type="entry name" value="MOLYBDOPTERIN_EUK"/>
    <property type="match status" value="1"/>
</dbReference>
<accession>P39868</accession>
<protein>
    <recommendedName>
        <fullName>Nitrate reductase [NADH], clone PBNBR1412</fullName>
        <shortName>NR</shortName>
        <ecNumber>1.7.1.1</ecNumber>
    </recommendedName>
</protein>
<gene>
    <name type="primary">NIA2</name>
</gene>
<keyword id="KW-1015">Disulfide bond</keyword>
<keyword id="KW-0274">FAD</keyword>
<keyword id="KW-0285">Flavoprotein</keyword>
<keyword id="KW-0349">Heme</keyword>
<keyword id="KW-0408">Iron</keyword>
<keyword id="KW-0479">Metal-binding</keyword>
<keyword id="KW-0500">Molybdenum</keyword>
<keyword id="KW-0520">NAD</keyword>
<keyword id="KW-0534">Nitrate assimilation</keyword>
<keyword id="KW-0560">Oxidoreductase</keyword>
<proteinExistence type="evidence at transcript level"/>